<dbReference type="EC" id="7.1.1.2"/>
<dbReference type="EMBL" id="AY377230">
    <property type="protein sequence ID" value="AAQ93769.1"/>
    <property type="molecule type" value="Genomic_DNA"/>
</dbReference>
<dbReference type="EMBL" id="AY377231">
    <property type="protein sequence ID" value="AAQ93770.1"/>
    <property type="molecule type" value="Genomic_DNA"/>
</dbReference>
<dbReference type="SMR" id="Q679B3"/>
<dbReference type="GO" id="GO:0005743">
    <property type="term" value="C:mitochondrial inner membrane"/>
    <property type="evidence" value="ECO:0000250"/>
    <property type="project" value="UniProtKB"/>
</dbReference>
<dbReference type="GO" id="GO:0045271">
    <property type="term" value="C:respiratory chain complex I"/>
    <property type="evidence" value="ECO:0000250"/>
    <property type="project" value="UniProtKB"/>
</dbReference>
<dbReference type="GO" id="GO:0008137">
    <property type="term" value="F:NADH dehydrogenase (ubiquinone) activity"/>
    <property type="evidence" value="ECO:0000250"/>
    <property type="project" value="UniProtKB"/>
</dbReference>
<dbReference type="GO" id="GO:0042773">
    <property type="term" value="P:ATP synthesis coupled electron transport"/>
    <property type="evidence" value="ECO:0007669"/>
    <property type="project" value="InterPro"/>
</dbReference>
<dbReference type="FunFam" id="1.10.287.3510:FF:000002">
    <property type="entry name" value="NADH-ubiquinone oxidoreductase chain 4L"/>
    <property type="match status" value="1"/>
</dbReference>
<dbReference type="Gene3D" id="1.10.287.3510">
    <property type="match status" value="1"/>
</dbReference>
<dbReference type="InterPro" id="IPR001133">
    <property type="entry name" value="NADH_UbQ_OxRdtase_chain4L/K"/>
</dbReference>
<dbReference type="InterPro" id="IPR039428">
    <property type="entry name" value="NUOK/Mnh_C1-like"/>
</dbReference>
<dbReference type="PANTHER" id="PTHR11434:SF0">
    <property type="entry name" value="NADH-UBIQUINONE OXIDOREDUCTASE CHAIN 4L"/>
    <property type="match status" value="1"/>
</dbReference>
<dbReference type="PANTHER" id="PTHR11434">
    <property type="entry name" value="NADH-UBIQUINONE OXIDOREDUCTASE SUBUNIT ND4L"/>
    <property type="match status" value="1"/>
</dbReference>
<dbReference type="Pfam" id="PF00420">
    <property type="entry name" value="Oxidored_q2"/>
    <property type="match status" value="1"/>
</dbReference>
<comment type="function">
    <text evidence="1">Core subunit of the mitochondrial membrane respiratory chain NADH dehydrogenase (Complex I) which catalyzes electron transfer from NADH through the respiratory chain, using ubiquinone as an electron acceptor. Part of the enzyme membrane arm which is embedded in the lipid bilayer and involved in proton translocation.</text>
</comment>
<comment type="catalytic activity">
    <reaction evidence="1">
        <text>a ubiquinone + NADH + 5 H(+)(in) = a ubiquinol + NAD(+) + 4 H(+)(out)</text>
        <dbReference type="Rhea" id="RHEA:29091"/>
        <dbReference type="Rhea" id="RHEA-COMP:9565"/>
        <dbReference type="Rhea" id="RHEA-COMP:9566"/>
        <dbReference type="ChEBI" id="CHEBI:15378"/>
        <dbReference type="ChEBI" id="CHEBI:16389"/>
        <dbReference type="ChEBI" id="CHEBI:17976"/>
        <dbReference type="ChEBI" id="CHEBI:57540"/>
        <dbReference type="ChEBI" id="CHEBI:57945"/>
        <dbReference type="EC" id="7.1.1.2"/>
    </reaction>
    <physiologicalReaction direction="left-to-right" evidence="1">
        <dbReference type="Rhea" id="RHEA:29092"/>
    </physiologicalReaction>
</comment>
<comment type="subunit">
    <text evidence="2">Core subunit of respiratory chain NADH dehydrogenase (Complex I) which is composed of 45 different subunits.</text>
</comment>
<comment type="subcellular location">
    <subcellularLocation>
        <location evidence="2">Mitochondrion inner membrane</location>
        <topology evidence="3">Multi-pass membrane protein</topology>
    </subcellularLocation>
</comment>
<comment type="similarity">
    <text evidence="4">Belongs to the complex I subunit 4L family.</text>
</comment>
<protein>
    <recommendedName>
        <fullName>NADH-ubiquinone oxidoreductase chain 4L</fullName>
        <ecNumber>7.1.1.2</ecNumber>
    </recommendedName>
    <alternativeName>
        <fullName>NADH dehydrogenase subunit 4L</fullName>
    </alternativeName>
</protein>
<keyword id="KW-0249">Electron transport</keyword>
<keyword id="KW-0472">Membrane</keyword>
<keyword id="KW-0496">Mitochondrion</keyword>
<keyword id="KW-0999">Mitochondrion inner membrane</keyword>
<keyword id="KW-0520">NAD</keyword>
<keyword id="KW-0679">Respiratory chain</keyword>
<keyword id="KW-1278">Translocase</keyword>
<keyword id="KW-0812">Transmembrane</keyword>
<keyword id="KW-1133">Transmembrane helix</keyword>
<keyword id="KW-0813">Transport</keyword>
<keyword id="KW-0830">Ubiquinone</keyword>
<organism>
    <name type="scientific">Mirounga angustirostris</name>
    <name type="common">Northern elephant seal</name>
    <name type="synonym">Macrorhinus angustirostris</name>
    <dbReference type="NCBI Taxonomy" id="9716"/>
    <lineage>
        <taxon>Eukaryota</taxon>
        <taxon>Metazoa</taxon>
        <taxon>Chordata</taxon>
        <taxon>Craniata</taxon>
        <taxon>Vertebrata</taxon>
        <taxon>Euteleostomi</taxon>
        <taxon>Mammalia</taxon>
        <taxon>Eutheria</taxon>
        <taxon>Laurasiatheria</taxon>
        <taxon>Carnivora</taxon>
        <taxon>Caniformia</taxon>
        <taxon>Pinnipedia</taxon>
        <taxon>Phocidae</taxon>
        <taxon>Monachinae</taxon>
        <taxon>Miroungini</taxon>
        <taxon>Mirounga</taxon>
    </lineage>
</organism>
<evidence type="ECO:0000250" key="1">
    <source>
        <dbReference type="UniProtKB" id="P03901"/>
    </source>
</evidence>
<evidence type="ECO:0000250" key="2">
    <source>
        <dbReference type="UniProtKB" id="P03902"/>
    </source>
</evidence>
<evidence type="ECO:0000255" key="3"/>
<evidence type="ECO:0000305" key="4"/>
<sequence>MTMVYANIFLAFIMSLMGLLMYRSHLMSSLLCLEGMMLSLFVMMTVTILNNHFTLASMTPIILLVFAACEAALGLSLLVMVSNTYGTDYVQNLNLLQC</sequence>
<proteinExistence type="inferred from homology"/>
<gene>
    <name type="primary">MT-ND4L</name>
    <name type="synonym">MTND4L</name>
    <name type="synonym">NADH4L</name>
    <name type="synonym">ND4L</name>
</gene>
<geneLocation type="mitochondrion"/>
<name>NU4LM_MIRAN</name>
<feature type="chain" id="PRO_0000275062" description="NADH-ubiquinone oxidoreductase chain 4L">
    <location>
        <begin position="1"/>
        <end position="98"/>
    </location>
</feature>
<feature type="transmembrane region" description="Helical" evidence="3">
    <location>
        <begin position="1"/>
        <end position="21"/>
    </location>
</feature>
<feature type="transmembrane region" description="Helical" evidence="3">
    <location>
        <begin position="29"/>
        <end position="49"/>
    </location>
</feature>
<feature type="transmembrane region" description="Helical" evidence="3">
    <location>
        <begin position="61"/>
        <end position="81"/>
    </location>
</feature>
<reference key="1">
    <citation type="journal article" date="2004" name="Mol. Phylogenet. Evol.">
        <title>A phylogeny of the extant Phocidae inferred from complete mitochondrial DNA coding regions.</title>
        <authorList>
            <person name="Davis C.S."/>
            <person name="Delisle I."/>
            <person name="Stirling I."/>
            <person name="Siniff D.B."/>
            <person name="Strobeck C."/>
        </authorList>
    </citation>
    <scope>NUCLEOTIDE SEQUENCE [GENOMIC DNA]</scope>
</reference>
<accession>Q679B3</accession>